<gene>
    <name type="primary">yaiA</name>
    <name type="ordered locus">Z0485</name>
    <name type="ordered locus">ECs0439</name>
</gene>
<organism>
    <name type="scientific">Escherichia coli O157:H7</name>
    <dbReference type="NCBI Taxonomy" id="83334"/>
    <lineage>
        <taxon>Bacteria</taxon>
        <taxon>Pseudomonadati</taxon>
        <taxon>Pseudomonadota</taxon>
        <taxon>Gammaproteobacteria</taxon>
        <taxon>Enterobacterales</taxon>
        <taxon>Enterobacteriaceae</taxon>
        <taxon>Escherichia</taxon>
    </lineage>
</organism>
<sequence length="63" mass="7281">MPTKPPYPREAYIVTIEKGKPGQTVTWYQLRADHPKPDSLISEHPTAQEAMDAKKRYEDPDKE</sequence>
<keyword id="KW-1185">Reference proteome</keyword>
<dbReference type="EMBL" id="AE005174">
    <property type="protein sequence ID" value="AAG54735.1"/>
    <property type="molecule type" value="Genomic_DNA"/>
</dbReference>
<dbReference type="EMBL" id="BA000007">
    <property type="protein sequence ID" value="BAB33862.1"/>
    <property type="molecule type" value="Genomic_DNA"/>
</dbReference>
<dbReference type="PIR" id="C85534">
    <property type="entry name" value="C85534"/>
</dbReference>
<dbReference type="PIR" id="G90683">
    <property type="entry name" value="G90683"/>
</dbReference>
<dbReference type="RefSeq" id="NP_308466.1">
    <property type="nucleotide sequence ID" value="NC_002695.1"/>
</dbReference>
<dbReference type="RefSeq" id="WP_001142439.1">
    <property type="nucleotide sequence ID" value="NZ_VOAI01000005.1"/>
</dbReference>
<dbReference type="BMRB" id="P0AAN7"/>
<dbReference type="SMR" id="P0AAN7"/>
<dbReference type="STRING" id="155864.Z0485"/>
<dbReference type="GeneID" id="914541"/>
<dbReference type="GeneID" id="93777072"/>
<dbReference type="KEGG" id="ece:Z0485"/>
<dbReference type="KEGG" id="ecs:ECs_0439"/>
<dbReference type="PATRIC" id="fig|386585.9.peg.535"/>
<dbReference type="eggNOG" id="ENOG5032ZKT">
    <property type="taxonomic scope" value="Bacteria"/>
</dbReference>
<dbReference type="HOGENOM" id="CLU_195275_0_0_6"/>
<dbReference type="OMA" id="TVTWYEL"/>
<dbReference type="Proteomes" id="UP000000558">
    <property type="component" value="Chromosome"/>
</dbReference>
<dbReference type="Proteomes" id="UP000002519">
    <property type="component" value="Chromosome"/>
</dbReference>
<dbReference type="Gene3D" id="3.30.730.30">
    <property type="entry name" value="YaiA protein"/>
    <property type="match status" value="1"/>
</dbReference>
<dbReference type="InterPro" id="IPR032303">
    <property type="entry name" value="YaiA"/>
</dbReference>
<dbReference type="InterPro" id="IPR038462">
    <property type="entry name" value="YaiA-like_sf"/>
</dbReference>
<dbReference type="NCBIfam" id="NF007698">
    <property type="entry name" value="PRK10380.1"/>
    <property type="match status" value="1"/>
</dbReference>
<dbReference type="Pfam" id="PF16362">
    <property type="entry name" value="YaiA"/>
    <property type="match status" value="1"/>
</dbReference>
<reference key="1">
    <citation type="journal article" date="2001" name="Nature">
        <title>Genome sequence of enterohaemorrhagic Escherichia coli O157:H7.</title>
        <authorList>
            <person name="Perna N.T."/>
            <person name="Plunkett G. III"/>
            <person name="Burland V."/>
            <person name="Mau B."/>
            <person name="Glasner J.D."/>
            <person name="Rose D.J."/>
            <person name="Mayhew G.F."/>
            <person name="Evans P.S."/>
            <person name="Gregor J."/>
            <person name="Kirkpatrick H.A."/>
            <person name="Posfai G."/>
            <person name="Hackett J."/>
            <person name="Klink S."/>
            <person name="Boutin A."/>
            <person name="Shao Y."/>
            <person name="Miller L."/>
            <person name="Grotbeck E.J."/>
            <person name="Davis N.W."/>
            <person name="Lim A."/>
            <person name="Dimalanta E.T."/>
            <person name="Potamousis K."/>
            <person name="Apodaca J."/>
            <person name="Anantharaman T.S."/>
            <person name="Lin J."/>
            <person name="Yen G."/>
            <person name="Schwartz D.C."/>
            <person name="Welch R.A."/>
            <person name="Blattner F.R."/>
        </authorList>
    </citation>
    <scope>NUCLEOTIDE SEQUENCE [LARGE SCALE GENOMIC DNA]</scope>
    <source>
        <strain>O157:H7 / EDL933 / ATCC 700927 / EHEC</strain>
    </source>
</reference>
<reference key="2">
    <citation type="journal article" date="2001" name="DNA Res.">
        <title>Complete genome sequence of enterohemorrhagic Escherichia coli O157:H7 and genomic comparison with a laboratory strain K-12.</title>
        <authorList>
            <person name="Hayashi T."/>
            <person name="Makino K."/>
            <person name="Ohnishi M."/>
            <person name="Kurokawa K."/>
            <person name="Ishii K."/>
            <person name="Yokoyama K."/>
            <person name="Han C.-G."/>
            <person name="Ohtsubo E."/>
            <person name="Nakayama K."/>
            <person name="Murata T."/>
            <person name="Tanaka M."/>
            <person name="Tobe T."/>
            <person name="Iida T."/>
            <person name="Takami H."/>
            <person name="Honda T."/>
            <person name="Sasakawa C."/>
            <person name="Ogasawara N."/>
            <person name="Yasunaga T."/>
            <person name="Kuhara S."/>
            <person name="Shiba T."/>
            <person name="Hattori M."/>
            <person name="Shinagawa H."/>
        </authorList>
    </citation>
    <scope>NUCLEOTIDE SEQUENCE [LARGE SCALE GENOMIC DNA]</scope>
    <source>
        <strain>O157:H7 / Sakai / RIMD 0509952 / EHEC</strain>
    </source>
</reference>
<protein>
    <recommendedName>
        <fullName>Uncharacterized protein YaiA</fullName>
    </recommendedName>
</protein>
<name>YAIA_ECO57</name>
<feature type="chain" id="PRO_0000168582" description="Uncharacterized protein YaiA">
    <location>
        <begin position="1"/>
        <end position="63"/>
    </location>
</feature>
<feature type="region of interest" description="Disordered" evidence="1">
    <location>
        <begin position="35"/>
        <end position="63"/>
    </location>
</feature>
<feature type="compositionally biased region" description="Basic and acidic residues" evidence="1">
    <location>
        <begin position="51"/>
        <end position="63"/>
    </location>
</feature>
<proteinExistence type="predicted"/>
<evidence type="ECO:0000256" key="1">
    <source>
        <dbReference type="SAM" id="MobiDB-lite"/>
    </source>
</evidence>
<accession>P0AAN7</accession>
<accession>P08366</accession>